<protein>
    <recommendedName>
        <fullName>Vodo peptide N</fullName>
    </recommendedName>
</protein>
<comment type="function">
    <text evidence="5">Probably participates in a plant defense mechanism.</text>
</comment>
<comment type="domain">
    <text evidence="1">The presence of a 'disulfide through disulfide knot' structurally defines this protein as a knottin.</text>
</comment>
<comment type="PTM">
    <text evidence="2 3 4">This is a cyclic peptide.</text>
</comment>
<comment type="mass spectrometry"/>
<comment type="mass spectrometry"/>
<comment type="similarity">
    <text evidence="2">Belongs to the cyclotide family. Moebius subfamily.</text>
</comment>
<comment type="caution">
    <text evidence="5">This peptide is cyclic. The start position was chosen by similarity to OAK1 (kalata-B1) for which the DNA sequence is known.</text>
</comment>
<keyword id="KW-0903">Direct protein sequencing</keyword>
<keyword id="KW-1015">Disulfide bond</keyword>
<keyword id="KW-0960">Knottin</keyword>
<keyword id="KW-0611">Plant defense</keyword>
<proteinExistence type="evidence at protein level"/>
<name>VODN_VIOOD</name>
<reference evidence="5" key="1">
    <citation type="journal article" date="2003" name="Phytochemistry">
        <title>Primary and 3-D modelled structures of two cyclotides from Viola odorata.</title>
        <authorList>
            <person name="Svangard E."/>
            <person name="Goransson U."/>
            <person name="Smith D."/>
            <person name="Verma C."/>
            <person name="Backlund A."/>
            <person name="Bohlin L."/>
            <person name="Claeson P."/>
        </authorList>
    </citation>
    <scope>PROTEIN SEQUENCE</scope>
    <scope>MASS SPECTROMETRY</scope>
    <scope>3D-STRUCTURE MODELING</scope>
</reference>
<reference evidence="5" key="2">
    <citation type="journal article" date="2006" name="Biochem. J.">
        <title>A novel suite of cyclotides from Viola odorata: sequence variation and the implications for structure, function and stability.</title>
        <authorList>
            <person name="Ireland D.C."/>
            <person name="Colgrave M.L."/>
            <person name="Craik D.J."/>
        </authorList>
    </citation>
    <scope>PROTEIN SEQUENCE</scope>
    <scope>MASS SPECTROMETRY</scope>
</reference>
<sequence>GLPVCGETCTLGKCYTAGCSCSWPVCYRN</sequence>
<evidence type="ECO:0000250" key="1">
    <source>
        <dbReference type="UniProtKB" id="P56871"/>
    </source>
</evidence>
<evidence type="ECO:0000255" key="2">
    <source>
        <dbReference type="PROSITE-ProRule" id="PRU00395"/>
    </source>
</evidence>
<evidence type="ECO:0000269" key="3">
    <source>
    </source>
</evidence>
<evidence type="ECO:0000269" key="4">
    <source>
    </source>
</evidence>
<evidence type="ECO:0000305" key="5"/>
<accession>P83838</accession>
<dbReference type="SMR" id="P83838"/>
<dbReference type="GO" id="GO:0006952">
    <property type="term" value="P:defense response"/>
    <property type="evidence" value="ECO:0000250"/>
    <property type="project" value="UniProtKB"/>
</dbReference>
<dbReference type="InterPro" id="IPR005535">
    <property type="entry name" value="Cyclotide"/>
</dbReference>
<dbReference type="InterPro" id="IPR012324">
    <property type="entry name" value="Cyclotide_moebius_CS"/>
</dbReference>
<dbReference type="InterPro" id="IPR036146">
    <property type="entry name" value="Cyclotide_sf"/>
</dbReference>
<dbReference type="Pfam" id="PF03784">
    <property type="entry name" value="Cyclotide"/>
    <property type="match status" value="1"/>
</dbReference>
<dbReference type="PIRSF" id="PIRSF037891">
    <property type="entry name" value="Cycloviolacin"/>
    <property type="match status" value="1"/>
</dbReference>
<dbReference type="SUPFAM" id="SSF57038">
    <property type="entry name" value="Cyclotides"/>
    <property type="match status" value="1"/>
</dbReference>
<dbReference type="PROSITE" id="PS51052">
    <property type="entry name" value="CYCLOTIDE"/>
    <property type="match status" value="1"/>
</dbReference>
<dbReference type="PROSITE" id="PS60009">
    <property type="entry name" value="CYCLOTIDE_MOEBIUS"/>
    <property type="match status" value="1"/>
</dbReference>
<feature type="peptide" id="PRO_0000043621" description="Vodo peptide N" evidence="2 3">
    <location>
        <begin position="1"/>
        <end position="29"/>
    </location>
</feature>
<feature type="disulfide bond" evidence="1 2">
    <location>
        <begin position="5"/>
        <end position="19"/>
    </location>
</feature>
<feature type="disulfide bond" evidence="1 2">
    <location>
        <begin position="9"/>
        <end position="21"/>
    </location>
</feature>
<feature type="disulfide bond" evidence="1 2">
    <location>
        <begin position="14"/>
        <end position="26"/>
    </location>
</feature>
<feature type="cross-link" description="Cyclopeptide (Gly-Asn)" evidence="3 4">
    <location>
        <begin position="1"/>
        <end position="29"/>
    </location>
</feature>
<organism>
    <name type="scientific">Viola odorata</name>
    <name type="common">Sweet violet</name>
    <dbReference type="NCBI Taxonomy" id="97441"/>
    <lineage>
        <taxon>Eukaryota</taxon>
        <taxon>Viridiplantae</taxon>
        <taxon>Streptophyta</taxon>
        <taxon>Embryophyta</taxon>
        <taxon>Tracheophyta</taxon>
        <taxon>Spermatophyta</taxon>
        <taxon>Magnoliopsida</taxon>
        <taxon>eudicotyledons</taxon>
        <taxon>Gunneridae</taxon>
        <taxon>Pentapetalae</taxon>
        <taxon>rosids</taxon>
        <taxon>fabids</taxon>
        <taxon>Malpighiales</taxon>
        <taxon>Violaceae</taxon>
        <taxon>Viola</taxon>
        <taxon>Viola subgen. Viola</taxon>
        <taxon>Viola sect. Viola</taxon>
        <taxon>Viola subsect. Viola</taxon>
    </lineage>
</organism>